<keyword id="KW-1003">Cell membrane</keyword>
<keyword id="KW-0255">Endonuclease</keyword>
<keyword id="KW-0378">Hydrolase</keyword>
<keyword id="KW-0472">Membrane</keyword>
<keyword id="KW-0540">Nuclease</keyword>
<keyword id="KW-1185">Reference proteome</keyword>
<keyword id="KW-0694">RNA-binding</keyword>
<keyword id="KW-0812">Transmembrane</keyword>
<keyword id="KW-1133">Transmembrane helix</keyword>
<proteinExistence type="inferred from homology"/>
<sequence>MPVLIATVGVVAVAALVIAIFVVIKFGRAPRVDAGNVRQPSGMSGPDAAAAEAEIREARSELERREQRLAEREARLDAEHERLAARERQLAELEEKLGRLQAELAQVAEERRLLLERTAGLTAEAAKAELVALIENQAKRDAALTVREIERAATEEAERRAREIVTTAIQRVASEQTAESVVSVVHLPGDEMKGRIIGREGRNIRAFESITGVNLIIDDTPEAVLLSCFDPVRREIARVALERLVDDGRIHPLRIEEVYEASRLEVERLCQRAAEDALLAVGITGMHPELVALLGRLRYRTSYGQNVLKHLVETAHLAGVMAAELHIDPQLVKRGALLHDIGKALSHEVEGSHALIGAELARRYGEHEDVVHAIEAHHNEVEPRTIEAVLTQAADAISGGRPGARRESLESYVQRLERLEEIASAYEGVEKVFAMQAGRELRVMVLPDVVDDIQAQVIARDIAKQIETELTYPGQIRVTVVRETRASEFAH</sequence>
<feature type="chain" id="PRO_0000344807" description="Ribonuclease Y">
    <location>
        <begin position="1"/>
        <end position="491"/>
    </location>
</feature>
<feature type="transmembrane region" description="Helical" evidence="1">
    <location>
        <begin position="4"/>
        <end position="24"/>
    </location>
</feature>
<feature type="domain" description="KH" evidence="1">
    <location>
        <begin position="181"/>
        <end position="247"/>
    </location>
</feature>
<feature type="domain" description="HD" evidence="2">
    <location>
        <begin position="307"/>
        <end position="400"/>
    </location>
</feature>
<organism>
    <name type="scientific">Acidothermus cellulolyticus (strain ATCC 43068 / DSM 8971 / 11B)</name>
    <dbReference type="NCBI Taxonomy" id="351607"/>
    <lineage>
        <taxon>Bacteria</taxon>
        <taxon>Bacillati</taxon>
        <taxon>Actinomycetota</taxon>
        <taxon>Actinomycetes</taxon>
        <taxon>Acidothermales</taxon>
        <taxon>Acidothermaceae</taxon>
        <taxon>Acidothermus</taxon>
    </lineage>
</organism>
<dbReference type="EC" id="3.1.-.-" evidence="1"/>
<dbReference type="EMBL" id="CP000481">
    <property type="protein sequence ID" value="ABK53262.1"/>
    <property type="molecule type" value="Genomic_DNA"/>
</dbReference>
<dbReference type="RefSeq" id="WP_011720325.1">
    <property type="nucleotide sequence ID" value="NC_008578.1"/>
</dbReference>
<dbReference type="SMR" id="A0LV02"/>
<dbReference type="STRING" id="351607.Acel_1490"/>
<dbReference type="KEGG" id="ace:Acel_1490"/>
<dbReference type="eggNOG" id="COG1418">
    <property type="taxonomic scope" value="Bacteria"/>
</dbReference>
<dbReference type="HOGENOM" id="CLU_028328_1_0_11"/>
<dbReference type="InParanoid" id="A0LV02"/>
<dbReference type="OrthoDB" id="9803205at2"/>
<dbReference type="Proteomes" id="UP000008221">
    <property type="component" value="Chromosome"/>
</dbReference>
<dbReference type="GO" id="GO:0005886">
    <property type="term" value="C:plasma membrane"/>
    <property type="evidence" value="ECO:0007669"/>
    <property type="project" value="UniProtKB-SubCell"/>
</dbReference>
<dbReference type="GO" id="GO:0003723">
    <property type="term" value="F:RNA binding"/>
    <property type="evidence" value="ECO:0007669"/>
    <property type="project" value="UniProtKB-UniRule"/>
</dbReference>
<dbReference type="GO" id="GO:0004521">
    <property type="term" value="F:RNA endonuclease activity"/>
    <property type="evidence" value="ECO:0007669"/>
    <property type="project" value="UniProtKB-UniRule"/>
</dbReference>
<dbReference type="GO" id="GO:0006402">
    <property type="term" value="P:mRNA catabolic process"/>
    <property type="evidence" value="ECO:0007669"/>
    <property type="project" value="UniProtKB-UniRule"/>
</dbReference>
<dbReference type="CDD" id="cd00077">
    <property type="entry name" value="HDc"/>
    <property type="match status" value="1"/>
</dbReference>
<dbReference type="CDD" id="cd22431">
    <property type="entry name" value="KH-I_RNaseY"/>
    <property type="match status" value="1"/>
</dbReference>
<dbReference type="Gene3D" id="1.10.3210.10">
    <property type="entry name" value="Hypothetical protein af1432"/>
    <property type="match status" value="1"/>
</dbReference>
<dbReference type="HAMAP" id="MF_00335">
    <property type="entry name" value="RNase_Y"/>
    <property type="match status" value="1"/>
</dbReference>
<dbReference type="InterPro" id="IPR003607">
    <property type="entry name" value="HD/PDEase_dom"/>
</dbReference>
<dbReference type="InterPro" id="IPR006674">
    <property type="entry name" value="HD_domain"/>
</dbReference>
<dbReference type="InterPro" id="IPR006675">
    <property type="entry name" value="HDIG_dom"/>
</dbReference>
<dbReference type="InterPro" id="IPR004087">
    <property type="entry name" value="KH_dom"/>
</dbReference>
<dbReference type="InterPro" id="IPR004088">
    <property type="entry name" value="KH_dom_type_1"/>
</dbReference>
<dbReference type="InterPro" id="IPR036612">
    <property type="entry name" value="KH_dom_type_1_sf"/>
</dbReference>
<dbReference type="InterPro" id="IPR017705">
    <property type="entry name" value="Ribonuclease_Y"/>
</dbReference>
<dbReference type="InterPro" id="IPR022711">
    <property type="entry name" value="RNase_Y_N"/>
</dbReference>
<dbReference type="NCBIfam" id="TIGR00277">
    <property type="entry name" value="HDIG"/>
    <property type="match status" value="1"/>
</dbReference>
<dbReference type="NCBIfam" id="TIGR03319">
    <property type="entry name" value="RNase_Y"/>
    <property type="match status" value="1"/>
</dbReference>
<dbReference type="PANTHER" id="PTHR12826">
    <property type="entry name" value="RIBONUCLEASE Y"/>
    <property type="match status" value="1"/>
</dbReference>
<dbReference type="PANTHER" id="PTHR12826:SF15">
    <property type="entry name" value="RIBONUCLEASE Y"/>
    <property type="match status" value="1"/>
</dbReference>
<dbReference type="Pfam" id="PF01966">
    <property type="entry name" value="HD"/>
    <property type="match status" value="1"/>
</dbReference>
<dbReference type="Pfam" id="PF00013">
    <property type="entry name" value="KH_1"/>
    <property type="match status" value="1"/>
</dbReference>
<dbReference type="Pfam" id="PF12072">
    <property type="entry name" value="RNase_Y_N"/>
    <property type="match status" value="1"/>
</dbReference>
<dbReference type="SMART" id="SM00471">
    <property type="entry name" value="HDc"/>
    <property type="match status" value="1"/>
</dbReference>
<dbReference type="SMART" id="SM00322">
    <property type="entry name" value="KH"/>
    <property type="match status" value="1"/>
</dbReference>
<dbReference type="SUPFAM" id="SSF54791">
    <property type="entry name" value="Eukaryotic type KH-domain (KH-domain type I)"/>
    <property type="match status" value="1"/>
</dbReference>
<dbReference type="SUPFAM" id="SSF109604">
    <property type="entry name" value="HD-domain/PDEase-like"/>
    <property type="match status" value="1"/>
</dbReference>
<dbReference type="PROSITE" id="PS51831">
    <property type="entry name" value="HD"/>
    <property type="match status" value="1"/>
</dbReference>
<dbReference type="PROSITE" id="PS50084">
    <property type="entry name" value="KH_TYPE_1"/>
    <property type="match status" value="1"/>
</dbReference>
<comment type="function">
    <text evidence="1">Endoribonuclease that initiates mRNA decay.</text>
</comment>
<comment type="subcellular location">
    <subcellularLocation>
        <location evidence="1">Cell membrane</location>
        <topology evidence="1">Single-pass membrane protein</topology>
    </subcellularLocation>
</comment>
<comment type="similarity">
    <text evidence="1">Belongs to the RNase Y family.</text>
</comment>
<protein>
    <recommendedName>
        <fullName evidence="1">Ribonuclease Y</fullName>
        <shortName evidence="1">RNase Y</shortName>
        <ecNumber evidence="1">3.1.-.-</ecNumber>
    </recommendedName>
</protein>
<accession>A0LV02</accession>
<gene>
    <name evidence="1" type="primary">rny</name>
    <name type="ordered locus">Acel_1490</name>
</gene>
<reference key="1">
    <citation type="journal article" date="2009" name="Genome Res.">
        <title>Complete genome of the cellulolytic thermophile Acidothermus cellulolyticus 11B provides insights into its ecophysiological and evolutionary adaptations.</title>
        <authorList>
            <person name="Barabote R.D."/>
            <person name="Xie G."/>
            <person name="Leu D.H."/>
            <person name="Normand P."/>
            <person name="Necsulea A."/>
            <person name="Daubin V."/>
            <person name="Medigue C."/>
            <person name="Adney W.S."/>
            <person name="Xu X.C."/>
            <person name="Lapidus A."/>
            <person name="Parales R.E."/>
            <person name="Detter C."/>
            <person name="Pujic P."/>
            <person name="Bruce D."/>
            <person name="Lavire C."/>
            <person name="Challacombe J.F."/>
            <person name="Brettin T.S."/>
            <person name="Berry A.M."/>
        </authorList>
    </citation>
    <scope>NUCLEOTIDE SEQUENCE [LARGE SCALE GENOMIC DNA]</scope>
    <source>
        <strain>ATCC 43068 / DSM 8971 / 11B</strain>
    </source>
</reference>
<evidence type="ECO:0000255" key="1">
    <source>
        <dbReference type="HAMAP-Rule" id="MF_00335"/>
    </source>
</evidence>
<evidence type="ECO:0000255" key="2">
    <source>
        <dbReference type="PROSITE-ProRule" id="PRU01175"/>
    </source>
</evidence>
<name>RNY_ACIC1</name>